<geneLocation type="chloroplast"/>
<keyword id="KW-0150">Chloroplast</keyword>
<keyword id="KW-0934">Plastid</keyword>
<keyword id="KW-1185">Reference proteome</keyword>
<keyword id="KW-0687">Ribonucleoprotein</keyword>
<keyword id="KW-0689">Ribosomal protein</keyword>
<keyword id="KW-0694">RNA-binding</keyword>
<keyword id="KW-0699">rRNA-binding</keyword>
<gene>
    <name evidence="1" type="primary">rps14</name>
</gene>
<protein>
    <recommendedName>
        <fullName evidence="1">Small ribosomal subunit protein uS14c</fullName>
    </recommendedName>
    <alternativeName>
        <fullName evidence="3">30S ribosomal protein S14, chloroplastic</fullName>
    </alternativeName>
</protein>
<evidence type="ECO:0000255" key="1">
    <source>
        <dbReference type="HAMAP-Rule" id="MF_00537"/>
    </source>
</evidence>
<evidence type="ECO:0000256" key="2">
    <source>
        <dbReference type="SAM" id="MobiDB-lite"/>
    </source>
</evidence>
<evidence type="ECO:0000305" key="3"/>
<organism>
    <name type="scientific">Solanum lycopersicum</name>
    <name type="common">Tomato</name>
    <name type="synonym">Lycopersicon esculentum</name>
    <dbReference type="NCBI Taxonomy" id="4081"/>
    <lineage>
        <taxon>Eukaryota</taxon>
        <taxon>Viridiplantae</taxon>
        <taxon>Streptophyta</taxon>
        <taxon>Embryophyta</taxon>
        <taxon>Tracheophyta</taxon>
        <taxon>Spermatophyta</taxon>
        <taxon>Magnoliopsida</taxon>
        <taxon>eudicotyledons</taxon>
        <taxon>Gunneridae</taxon>
        <taxon>Pentapetalae</taxon>
        <taxon>asterids</taxon>
        <taxon>lamiids</taxon>
        <taxon>Solanales</taxon>
        <taxon>Solanaceae</taxon>
        <taxon>Solanoideae</taxon>
        <taxon>Solaneae</taxon>
        <taxon>Solanum</taxon>
        <taxon>Solanum subgen. Lycopersicon</taxon>
    </lineage>
</organism>
<dbReference type="EMBL" id="DQ347959">
    <property type="protein sequence ID" value="ABC56298.1"/>
    <property type="molecule type" value="Genomic_DNA"/>
</dbReference>
<dbReference type="EMBL" id="AM087200">
    <property type="protein sequence ID" value="CAJ32391.1"/>
    <property type="molecule type" value="Genomic_DNA"/>
</dbReference>
<dbReference type="RefSeq" id="AP_004926.1">
    <property type="nucleotide sequence ID" value="AC_000188.1"/>
</dbReference>
<dbReference type="RefSeq" id="YP_008563086.1">
    <property type="nucleotide sequence ID" value="NC_007898.3"/>
</dbReference>
<dbReference type="SMR" id="Q2MIA2"/>
<dbReference type="FunCoup" id="Q2MIA2">
    <property type="interactions" value="42"/>
</dbReference>
<dbReference type="STRING" id="4081.Q2MIA2"/>
<dbReference type="GeneID" id="3950475"/>
<dbReference type="KEGG" id="sly:3950475"/>
<dbReference type="InParanoid" id="Q2MIA2"/>
<dbReference type="OrthoDB" id="413436at2759"/>
<dbReference type="Proteomes" id="UP000004994">
    <property type="component" value="Chloroplast"/>
</dbReference>
<dbReference type="GO" id="GO:0009507">
    <property type="term" value="C:chloroplast"/>
    <property type="evidence" value="ECO:0007669"/>
    <property type="project" value="UniProtKB-SubCell"/>
</dbReference>
<dbReference type="GO" id="GO:0015935">
    <property type="term" value="C:small ribosomal subunit"/>
    <property type="evidence" value="ECO:0000318"/>
    <property type="project" value="GO_Central"/>
</dbReference>
<dbReference type="GO" id="GO:0019843">
    <property type="term" value="F:rRNA binding"/>
    <property type="evidence" value="ECO:0007669"/>
    <property type="project" value="UniProtKB-UniRule"/>
</dbReference>
<dbReference type="GO" id="GO:0003735">
    <property type="term" value="F:structural constituent of ribosome"/>
    <property type="evidence" value="ECO:0000318"/>
    <property type="project" value="GO_Central"/>
</dbReference>
<dbReference type="GO" id="GO:0006412">
    <property type="term" value="P:translation"/>
    <property type="evidence" value="ECO:0000318"/>
    <property type="project" value="GO_Central"/>
</dbReference>
<dbReference type="FunFam" id="1.10.287.1480:FF:000001">
    <property type="entry name" value="30S ribosomal protein S14"/>
    <property type="match status" value="1"/>
</dbReference>
<dbReference type="Gene3D" id="1.10.287.1480">
    <property type="match status" value="1"/>
</dbReference>
<dbReference type="HAMAP" id="MF_00537">
    <property type="entry name" value="Ribosomal_uS14_1"/>
    <property type="match status" value="1"/>
</dbReference>
<dbReference type="InterPro" id="IPR001209">
    <property type="entry name" value="Ribosomal_uS14"/>
</dbReference>
<dbReference type="InterPro" id="IPR023036">
    <property type="entry name" value="Ribosomal_uS14_bac/plastid"/>
</dbReference>
<dbReference type="InterPro" id="IPR018271">
    <property type="entry name" value="Ribosomal_uS14_CS"/>
</dbReference>
<dbReference type="NCBIfam" id="NF006477">
    <property type="entry name" value="PRK08881.1"/>
    <property type="match status" value="1"/>
</dbReference>
<dbReference type="PANTHER" id="PTHR19836">
    <property type="entry name" value="30S RIBOSOMAL PROTEIN S14"/>
    <property type="match status" value="1"/>
</dbReference>
<dbReference type="PANTHER" id="PTHR19836:SF19">
    <property type="entry name" value="SMALL RIBOSOMAL SUBUNIT PROTEIN US14M"/>
    <property type="match status" value="1"/>
</dbReference>
<dbReference type="Pfam" id="PF00253">
    <property type="entry name" value="Ribosomal_S14"/>
    <property type="match status" value="1"/>
</dbReference>
<dbReference type="SUPFAM" id="SSF57716">
    <property type="entry name" value="Glucocorticoid receptor-like (DNA-binding domain)"/>
    <property type="match status" value="1"/>
</dbReference>
<dbReference type="PROSITE" id="PS00527">
    <property type="entry name" value="RIBOSOMAL_S14"/>
    <property type="match status" value="1"/>
</dbReference>
<reference key="1">
    <citation type="journal article" date="2006" name="Theor. Appl. Genet.">
        <title>Complete chloroplast genome sequences of Solanum bulbocastanum, Solanum lycopersicum and comparative analyses with other Solanaceae genomes.</title>
        <authorList>
            <person name="Daniell H."/>
            <person name="Lee S.-B."/>
            <person name="Grevich J."/>
            <person name="Saski C."/>
            <person name="Quesada-Vargas T."/>
            <person name="Guda C."/>
            <person name="Tomkins J."/>
            <person name="Jansen R.K."/>
        </authorList>
    </citation>
    <scope>NUCLEOTIDE SEQUENCE [LARGE SCALE GENOMIC DNA]</scope>
    <source>
        <strain>cv. LA3023</strain>
    </source>
</reference>
<reference key="2">
    <citation type="journal article" date="2006" name="J. Mol. Evol.">
        <title>Sequence of the tomato chloroplast DNA and evolutionary comparison of solanaceous plastid genomes.</title>
        <authorList>
            <person name="Kahlau S."/>
            <person name="Aspinall S."/>
            <person name="Gray J.C."/>
            <person name="Bock R."/>
        </authorList>
    </citation>
    <scope>NUCLEOTIDE SEQUENCE [LARGE SCALE GENOMIC DNA]</scope>
    <source>
        <strain>cv. IPA-6</strain>
    </source>
</reference>
<name>RR14_SOLLC</name>
<accession>Q2MIA2</accession>
<sequence>MARKSLIQREKKRQKLEQKYHSIRRSSKKEISKVPSLSDKWEIYGKLQSLPRNSAPTRLHRRCFLTGRPRANYRDFGLSGHILREMVHACLLPGATRSSW</sequence>
<proteinExistence type="inferred from homology"/>
<feature type="chain" id="PRO_0000276703" description="Small ribosomal subunit protein uS14c">
    <location>
        <begin position="1"/>
        <end position="100"/>
    </location>
</feature>
<feature type="region of interest" description="Disordered" evidence="2">
    <location>
        <begin position="1"/>
        <end position="31"/>
    </location>
</feature>
<comment type="function">
    <text evidence="1">Binds 16S rRNA, required for the assembly of 30S particles.</text>
</comment>
<comment type="subunit">
    <text evidence="1">Part of the 30S ribosomal subunit.</text>
</comment>
<comment type="subcellular location">
    <subcellularLocation>
        <location>Plastid</location>
        <location>Chloroplast</location>
    </subcellularLocation>
</comment>
<comment type="similarity">
    <text evidence="1">Belongs to the universal ribosomal protein uS14 family.</text>
</comment>